<feature type="chain" id="PRO_0000261807" description="Large ribosomal subunit protein uL13">
    <location>
        <begin position="1"/>
        <end position="151"/>
    </location>
</feature>
<sequence length="151" mass="17072">MNKTYLPSQGAIERNWYVVDAADQRLGRLATEIARVLRGKHKPTYTPHMDTGDFVIVINADKVTVTGRKASQKLYRRHSGRPGGMKVETFAHLQQRLPERIIEQAVKGMLPKNALGRQLFTKLKVYRGAEHPHQAQQPEVLSIQTFAGDDN</sequence>
<gene>
    <name evidence="1" type="primary">rplM</name>
    <name evidence="1" type="synonym">rpl13</name>
    <name type="ordered locus">syc1891_d</name>
</gene>
<evidence type="ECO:0000255" key="1">
    <source>
        <dbReference type="HAMAP-Rule" id="MF_01366"/>
    </source>
</evidence>
<evidence type="ECO:0000305" key="2"/>
<dbReference type="EMBL" id="AP008231">
    <property type="protein sequence ID" value="BAD80081.1"/>
    <property type="molecule type" value="Genomic_DNA"/>
</dbReference>
<dbReference type="RefSeq" id="WP_011244201.1">
    <property type="nucleotide sequence ID" value="NZ_CP085785.1"/>
</dbReference>
<dbReference type="SMR" id="Q5N0T9"/>
<dbReference type="GeneID" id="72431089"/>
<dbReference type="KEGG" id="syc:syc1891_d"/>
<dbReference type="eggNOG" id="COG0102">
    <property type="taxonomic scope" value="Bacteria"/>
</dbReference>
<dbReference type="Proteomes" id="UP000001175">
    <property type="component" value="Chromosome"/>
</dbReference>
<dbReference type="GO" id="GO:0022625">
    <property type="term" value="C:cytosolic large ribosomal subunit"/>
    <property type="evidence" value="ECO:0007669"/>
    <property type="project" value="TreeGrafter"/>
</dbReference>
<dbReference type="GO" id="GO:0003729">
    <property type="term" value="F:mRNA binding"/>
    <property type="evidence" value="ECO:0007669"/>
    <property type="project" value="TreeGrafter"/>
</dbReference>
<dbReference type="GO" id="GO:0003735">
    <property type="term" value="F:structural constituent of ribosome"/>
    <property type="evidence" value="ECO:0007669"/>
    <property type="project" value="InterPro"/>
</dbReference>
<dbReference type="GO" id="GO:0017148">
    <property type="term" value="P:negative regulation of translation"/>
    <property type="evidence" value="ECO:0007669"/>
    <property type="project" value="TreeGrafter"/>
</dbReference>
<dbReference type="GO" id="GO:0006412">
    <property type="term" value="P:translation"/>
    <property type="evidence" value="ECO:0007669"/>
    <property type="project" value="UniProtKB-UniRule"/>
</dbReference>
<dbReference type="CDD" id="cd00392">
    <property type="entry name" value="Ribosomal_L13"/>
    <property type="match status" value="1"/>
</dbReference>
<dbReference type="FunFam" id="3.90.1180.10:FF:000001">
    <property type="entry name" value="50S ribosomal protein L13"/>
    <property type="match status" value="1"/>
</dbReference>
<dbReference type="Gene3D" id="3.90.1180.10">
    <property type="entry name" value="Ribosomal protein L13"/>
    <property type="match status" value="1"/>
</dbReference>
<dbReference type="HAMAP" id="MF_01366">
    <property type="entry name" value="Ribosomal_uL13"/>
    <property type="match status" value="1"/>
</dbReference>
<dbReference type="InterPro" id="IPR005822">
    <property type="entry name" value="Ribosomal_uL13"/>
</dbReference>
<dbReference type="InterPro" id="IPR005823">
    <property type="entry name" value="Ribosomal_uL13_bac-type"/>
</dbReference>
<dbReference type="InterPro" id="IPR023563">
    <property type="entry name" value="Ribosomal_uL13_CS"/>
</dbReference>
<dbReference type="InterPro" id="IPR036899">
    <property type="entry name" value="Ribosomal_uL13_sf"/>
</dbReference>
<dbReference type="NCBIfam" id="TIGR01066">
    <property type="entry name" value="rplM_bact"/>
    <property type="match status" value="1"/>
</dbReference>
<dbReference type="PANTHER" id="PTHR11545:SF2">
    <property type="entry name" value="LARGE RIBOSOMAL SUBUNIT PROTEIN UL13M"/>
    <property type="match status" value="1"/>
</dbReference>
<dbReference type="PANTHER" id="PTHR11545">
    <property type="entry name" value="RIBOSOMAL PROTEIN L13"/>
    <property type="match status" value="1"/>
</dbReference>
<dbReference type="Pfam" id="PF00572">
    <property type="entry name" value="Ribosomal_L13"/>
    <property type="match status" value="1"/>
</dbReference>
<dbReference type="PIRSF" id="PIRSF002181">
    <property type="entry name" value="Ribosomal_L13"/>
    <property type="match status" value="1"/>
</dbReference>
<dbReference type="SUPFAM" id="SSF52161">
    <property type="entry name" value="Ribosomal protein L13"/>
    <property type="match status" value="1"/>
</dbReference>
<dbReference type="PROSITE" id="PS00783">
    <property type="entry name" value="RIBOSOMAL_L13"/>
    <property type="match status" value="1"/>
</dbReference>
<reference key="1">
    <citation type="journal article" date="2007" name="Photosyn. Res.">
        <title>Complete nucleotide sequence of the freshwater unicellular cyanobacterium Synechococcus elongatus PCC 6301 chromosome: gene content and organization.</title>
        <authorList>
            <person name="Sugita C."/>
            <person name="Ogata K."/>
            <person name="Shikata M."/>
            <person name="Jikuya H."/>
            <person name="Takano J."/>
            <person name="Furumichi M."/>
            <person name="Kanehisa M."/>
            <person name="Omata T."/>
            <person name="Sugiura M."/>
            <person name="Sugita M."/>
        </authorList>
    </citation>
    <scope>NUCLEOTIDE SEQUENCE [LARGE SCALE GENOMIC DNA]</scope>
    <source>
        <strain>ATCC 27144 / PCC 6301 / SAUG 1402/1</strain>
    </source>
</reference>
<comment type="function">
    <text evidence="1">This protein is one of the early assembly proteins of the 50S ribosomal subunit, although it is not seen to bind rRNA by itself. It is important during the early stages of 50S assembly.</text>
</comment>
<comment type="subunit">
    <text evidence="1">Part of the 50S ribosomal subunit.</text>
</comment>
<comment type="similarity">
    <text evidence="1">Belongs to the universal ribosomal protein uL13 family.</text>
</comment>
<protein>
    <recommendedName>
        <fullName evidence="1">Large ribosomal subunit protein uL13</fullName>
    </recommendedName>
    <alternativeName>
        <fullName evidence="2">50S ribosomal protein L13</fullName>
    </alternativeName>
</protein>
<accession>Q5N0T9</accession>
<proteinExistence type="inferred from homology"/>
<name>RL13_SYNP6</name>
<organism>
    <name type="scientific">Synechococcus sp. (strain ATCC 27144 / PCC 6301 / SAUG 1402/1)</name>
    <name type="common">Anacystis nidulans</name>
    <dbReference type="NCBI Taxonomy" id="269084"/>
    <lineage>
        <taxon>Bacteria</taxon>
        <taxon>Bacillati</taxon>
        <taxon>Cyanobacteriota</taxon>
        <taxon>Cyanophyceae</taxon>
        <taxon>Synechococcales</taxon>
        <taxon>Synechococcaceae</taxon>
        <taxon>Synechococcus</taxon>
    </lineage>
</organism>
<keyword id="KW-0687">Ribonucleoprotein</keyword>
<keyword id="KW-0689">Ribosomal protein</keyword>